<protein>
    <recommendedName>
        <fullName>Cytochrome P450 79B1</fullName>
        <ecNumber>1.14.-.-</ecNumber>
    </recommendedName>
</protein>
<sequence length="542" mass="61291">MNTFTSNSSDLTSTTKQTLSFSNMYLLTTLQAFVAITLVMLLKKVLVNDTNKKKLSLPPGPTGWPIIGMVPTMLKSRPVFRWLHSIMKQLNTEIACVRLGSTHVITVTCPKIAREVLKQQDALFASRPMTYAQNVLSNGYKTCVITPFGEQFKKMRKVVMTELVCPARHRWLHQKRAEENDHLTAWVYNMVNNSDSVDFRFVTRHYCGNAIKKLMFGTRTFSQNTAPNGGPTAEDIEHMEAMFEALGFTFSFCISDYLPILTGLDLNGHEKIMRDSSAIMDKYHDPIIDARIKMWREGKKTQIEDFLDIFISIKDEEGNPLLTADEIKPTIKELVMAAPDNPSNAVEWAMAEMVNKPEILRKAMEEIDRVVGKERLVQESDIPKLNYVKAILREAFRLHPVAAFNLPHVALSDATVAGYHIPKGSQVLLSRYGLGRNPKVWADPLSFKPERHLNECSEVTLTENDLRFISFSTGKRGCAAPALGTALTTMLLARLLQGFTWKLPENETRVELMESSHDMFLAKPLVMVGELRLPEHLYPTVK</sequence>
<feature type="chain" id="PRO_0000052155" description="Cytochrome P450 79B1">
    <location>
        <begin position="1"/>
        <end position="542"/>
    </location>
</feature>
<feature type="transmembrane region" description="Helical" evidence="2">
    <location>
        <begin position="21"/>
        <end position="41"/>
    </location>
</feature>
<feature type="binding site" description="axial binding residue" evidence="1">
    <location>
        <position position="478"/>
    </location>
    <ligand>
        <name>heme</name>
        <dbReference type="ChEBI" id="CHEBI:30413"/>
    </ligand>
    <ligandPart>
        <name>Fe</name>
        <dbReference type="ChEBI" id="CHEBI:18248"/>
    </ligandPart>
</feature>
<dbReference type="EC" id="1.14.-.-"/>
<dbReference type="EMBL" id="AF069494">
    <property type="protein sequence ID" value="AAD03415.1"/>
    <property type="molecule type" value="mRNA"/>
</dbReference>
<dbReference type="SMR" id="O81345"/>
<dbReference type="OrthoDB" id="2789670at2759"/>
<dbReference type="BioCyc" id="MetaCyc:MONOMER-20257"/>
<dbReference type="SABIO-RK" id="O81345"/>
<dbReference type="GO" id="GO:0016020">
    <property type="term" value="C:membrane"/>
    <property type="evidence" value="ECO:0007669"/>
    <property type="project" value="UniProtKB-SubCell"/>
</dbReference>
<dbReference type="GO" id="GO:0020037">
    <property type="term" value="F:heme binding"/>
    <property type="evidence" value="ECO:0007669"/>
    <property type="project" value="InterPro"/>
</dbReference>
<dbReference type="GO" id="GO:0005506">
    <property type="term" value="F:iron ion binding"/>
    <property type="evidence" value="ECO:0007669"/>
    <property type="project" value="InterPro"/>
</dbReference>
<dbReference type="GO" id="GO:0004497">
    <property type="term" value="F:monooxygenase activity"/>
    <property type="evidence" value="ECO:0007669"/>
    <property type="project" value="UniProtKB-KW"/>
</dbReference>
<dbReference type="GO" id="GO:0016705">
    <property type="term" value="F:oxidoreductase activity, acting on paired donors, with incorporation or reduction of molecular oxygen"/>
    <property type="evidence" value="ECO:0007669"/>
    <property type="project" value="InterPro"/>
</dbReference>
<dbReference type="GO" id="GO:0044550">
    <property type="term" value="P:secondary metabolite biosynthetic process"/>
    <property type="evidence" value="ECO:0007669"/>
    <property type="project" value="UniProtKB-ARBA"/>
</dbReference>
<dbReference type="CDD" id="cd20658">
    <property type="entry name" value="CYP79"/>
    <property type="match status" value="1"/>
</dbReference>
<dbReference type="FunFam" id="1.10.630.10:FF:000037">
    <property type="entry name" value="Cytochrome P450 9"/>
    <property type="match status" value="1"/>
</dbReference>
<dbReference type="Gene3D" id="1.10.630.10">
    <property type="entry name" value="Cytochrome P450"/>
    <property type="match status" value="1"/>
</dbReference>
<dbReference type="InterPro" id="IPR001128">
    <property type="entry name" value="Cyt_P450"/>
</dbReference>
<dbReference type="InterPro" id="IPR017972">
    <property type="entry name" value="Cyt_P450_CS"/>
</dbReference>
<dbReference type="InterPro" id="IPR002401">
    <property type="entry name" value="Cyt_P450_E_grp-I"/>
</dbReference>
<dbReference type="InterPro" id="IPR036396">
    <property type="entry name" value="Cyt_P450_sf"/>
</dbReference>
<dbReference type="PANTHER" id="PTHR47944">
    <property type="entry name" value="CYTOCHROME P450 98A9"/>
    <property type="match status" value="1"/>
</dbReference>
<dbReference type="PANTHER" id="PTHR47944:SF4">
    <property type="entry name" value="OS09G0441700 PROTEIN"/>
    <property type="match status" value="1"/>
</dbReference>
<dbReference type="Pfam" id="PF00067">
    <property type="entry name" value="p450"/>
    <property type="match status" value="1"/>
</dbReference>
<dbReference type="PRINTS" id="PR00463">
    <property type="entry name" value="EP450I"/>
</dbReference>
<dbReference type="PRINTS" id="PR00385">
    <property type="entry name" value="P450"/>
</dbReference>
<dbReference type="SUPFAM" id="SSF48264">
    <property type="entry name" value="Cytochrome P450"/>
    <property type="match status" value="1"/>
</dbReference>
<dbReference type="PROSITE" id="PS00086">
    <property type="entry name" value="CYTOCHROME_P450"/>
    <property type="match status" value="1"/>
</dbReference>
<accession>O81345</accession>
<keyword id="KW-0349">Heme</keyword>
<keyword id="KW-0408">Iron</keyword>
<keyword id="KW-0472">Membrane</keyword>
<keyword id="KW-0479">Metal-binding</keyword>
<keyword id="KW-0503">Monooxygenase</keyword>
<keyword id="KW-0560">Oxidoreductase</keyword>
<keyword id="KW-0812">Transmembrane</keyword>
<keyword id="KW-1133">Transmembrane helix</keyword>
<proteinExistence type="evidence at transcript level"/>
<name>C79B1_SINAL</name>
<comment type="function">
    <text>Converts tyrosine to para-hydrophenylacetaldoxime in para-hydroxybenzylglucosinolate biosynthesis.</text>
</comment>
<comment type="cofactor">
    <cofactor evidence="1">
        <name>heme</name>
        <dbReference type="ChEBI" id="CHEBI:30413"/>
    </cofactor>
</comment>
<comment type="subcellular location">
    <subcellularLocation>
        <location evidence="3">Membrane</location>
        <topology evidence="3">Single-pass membrane protein</topology>
    </subcellularLocation>
</comment>
<comment type="similarity">
    <text evidence="3">Belongs to the cytochrome P450 family.</text>
</comment>
<gene>
    <name type="primary">CYP79B1</name>
</gene>
<evidence type="ECO:0000250" key="1"/>
<evidence type="ECO:0000255" key="2"/>
<evidence type="ECO:0000305" key="3"/>
<reference key="1">
    <citation type="journal article" date="1998" name="Plant Mol. Biol.">
        <title>The presence of CYP79 homologues in glucosinolate-producing plants shows evolutionary conservation of the enzymes in the conversion of amino acid to aldoxime in the biosynthesis of cyanogenic glucosides and glucosinolates.</title>
        <authorList>
            <person name="Bak S."/>
            <person name="Nielsen H.L."/>
            <person name="Halkier B.A."/>
        </authorList>
    </citation>
    <scope>NUCLEOTIDE SEQUENCE [MRNA]</scope>
    <source>
        <strain>cv. Carla</strain>
    </source>
</reference>
<organism>
    <name type="scientific">Sinapis alba</name>
    <name type="common">White mustard</name>
    <name type="synonym">Brassica hirta</name>
    <dbReference type="NCBI Taxonomy" id="3728"/>
    <lineage>
        <taxon>Eukaryota</taxon>
        <taxon>Viridiplantae</taxon>
        <taxon>Streptophyta</taxon>
        <taxon>Embryophyta</taxon>
        <taxon>Tracheophyta</taxon>
        <taxon>Spermatophyta</taxon>
        <taxon>Magnoliopsida</taxon>
        <taxon>eudicotyledons</taxon>
        <taxon>Gunneridae</taxon>
        <taxon>Pentapetalae</taxon>
        <taxon>rosids</taxon>
        <taxon>malvids</taxon>
        <taxon>Brassicales</taxon>
        <taxon>Brassicaceae</taxon>
        <taxon>Brassiceae</taxon>
        <taxon>Sinapis</taxon>
    </lineage>
</organism>